<organism>
    <name type="scientific">Synechococcus sp. (strain WH7803)</name>
    <dbReference type="NCBI Taxonomy" id="32051"/>
    <lineage>
        <taxon>Bacteria</taxon>
        <taxon>Bacillati</taxon>
        <taxon>Cyanobacteriota</taxon>
        <taxon>Cyanophyceae</taxon>
        <taxon>Synechococcales</taxon>
        <taxon>Synechococcaceae</taxon>
        <taxon>Synechococcus</taxon>
    </lineage>
</organism>
<accession>A5GIH3</accession>
<sequence length="46" mass="4779">MESSSPALSVAIAVLAALLGLTGFGVYTAFGPPSKRLDDPFDDHED</sequence>
<name>PSBN_SYNPW</name>
<proteinExistence type="inferred from homology"/>
<comment type="function">
    <text evidence="1">May play a role in photosystem I and II biogenesis.</text>
</comment>
<comment type="subcellular location">
    <subcellularLocation>
        <location evidence="1">Cellular thylakoid membrane</location>
        <topology evidence="1">Single-pass membrane protein</topology>
    </subcellularLocation>
</comment>
<comment type="similarity">
    <text evidence="1">Belongs to the PsbN family.</text>
</comment>
<comment type="caution">
    <text evidence="1">Originally thought to be a component of PSII; based on experiments in Synechocystis, N.tabacum and barley, and its absence from PSII in T.elongatus and T.vulcanus, this is probably not true.</text>
</comment>
<evidence type="ECO:0000255" key="1">
    <source>
        <dbReference type="HAMAP-Rule" id="MF_00293"/>
    </source>
</evidence>
<keyword id="KW-0472">Membrane</keyword>
<keyword id="KW-1185">Reference proteome</keyword>
<keyword id="KW-0793">Thylakoid</keyword>
<keyword id="KW-0812">Transmembrane</keyword>
<keyword id="KW-1133">Transmembrane helix</keyword>
<protein>
    <recommendedName>
        <fullName evidence="1">Protein PsbN</fullName>
    </recommendedName>
</protein>
<gene>
    <name evidence="1" type="primary">psbN</name>
    <name type="ordered locus">SynWH7803_0312</name>
</gene>
<feature type="chain" id="PRO_1000004129" description="Protein PsbN">
    <location>
        <begin position="1"/>
        <end position="46"/>
    </location>
</feature>
<feature type="transmembrane region" description="Helical" evidence="1">
    <location>
        <begin position="10"/>
        <end position="30"/>
    </location>
</feature>
<reference key="1">
    <citation type="submission" date="2006-05" db="EMBL/GenBank/DDBJ databases">
        <authorList>
            <consortium name="Genoscope"/>
        </authorList>
    </citation>
    <scope>NUCLEOTIDE SEQUENCE [LARGE SCALE GENOMIC DNA]</scope>
    <source>
        <strain>WH7803</strain>
    </source>
</reference>
<dbReference type="EMBL" id="CT971583">
    <property type="protein sequence ID" value="CAK22738.1"/>
    <property type="molecule type" value="Genomic_DNA"/>
</dbReference>
<dbReference type="SMR" id="A5GIH3"/>
<dbReference type="STRING" id="32051.SynWH7803_0312"/>
<dbReference type="KEGG" id="syx:SynWH7803_0312"/>
<dbReference type="eggNOG" id="ENOG50339MH">
    <property type="taxonomic scope" value="Bacteria"/>
</dbReference>
<dbReference type="HOGENOM" id="CLU_205504_1_0_3"/>
<dbReference type="Proteomes" id="UP000001566">
    <property type="component" value="Chromosome"/>
</dbReference>
<dbReference type="GO" id="GO:0031676">
    <property type="term" value="C:plasma membrane-derived thylakoid membrane"/>
    <property type="evidence" value="ECO:0007669"/>
    <property type="project" value="UniProtKB-SubCell"/>
</dbReference>
<dbReference type="GO" id="GO:0015979">
    <property type="term" value="P:photosynthesis"/>
    <property type="evidence" value="ECO:0007669"/>
    <property type="project" value="InterPro"/>
</dbReference>
<dbReference type="HAMAP" id="MF_00293">
    <property type="entry name" value="PSII_PsbN"/>
    <property type="match status" value="1"/>
</dbReference>
<dbReference type="InterPro" id="IPR003398">
    <property type="entry name" value="PSII_PsbN"/>
</dbReference>
<dbReference type="NCBIfam" id="NF009650">
    <property type="entry name" value="PRK13183.1"/>
    <property type="match status" value="1"/>
</dbReference>
<dbReference type="PANTHER" id="PTHR35326">
    <property type="entry name" value="PROTEIN PSBN"/>
    <property type="match status" value="1"/>
</dbReference>
<dbReference type="PANTHER" id="PTHR35326:SF3">
    <property type="entry name" value="PROTEIN PSBN"/>
    <property type="match status" value="1"/>
</dbReference>
<dbReference type="Pfam" id="PF02468">
    <property type="entry name" value="PsbN"/>
    <property type="match status" value="1"/>
</dbReference>